<proteinExistence type="evidence at transcript level"/>
<keyword id="KW-0027">Amidation</keyword>
<keyword id="KW-1015">Disulfide bond</keyword>
<keyword id="KW-0872">Ion channel impairing toxin</keyword>
<keyword id="KW-0528">Neurotoxin</keyword>
<keyword id="KW-0964">Secreted</keyword>
<keyword id="KW-0732">Signal</keyword>
<keyword id="KW-0800">Toxin</keyword>
<keyword id="KW-0738">Voltage-gated sodium channel impairing toxin</keyword>
<evidence type="ECO:0000250" key="1"/>
<evidence type="ECO:0000255" key="2">
    <source>
        <dbReference type="PROSITE-ProRule" id="PRU01210"/>
    </source>
</evidence>
<evidence type="ECO:0000305" key="3"/>
<protein>
    <recommendedName>
        <fullName>Depressant insect toxin BmK ITa1</fullName>
    </recommendedName>
</protein>
<reference key="1">
    <citation type="submission" date="2002-03" db="EMBL/GenBank/DDBJ databases">
        <authorList>
            <person name="Liu Z."/>
            <person name="Chi C."/>
            <person name="Wu X."/>
        </authorList>
    </citation>
    <scope>NUCLEOTIDE SEQUENCE [MRNA]</scope>
</reference>
<accession>Q8T3T0</accession>
<accession>Q9U7E5</accession>
<comment type="function">
    <text evidence="1">Depressant insect toxins cause a transient contraction paralysis followed by a slow flaccid paralysis. They bind voltage-independently to sodium channels (Nav) and block action potentials, primarily by depolarizing the axonal membrane and suppressing the sodium current (By similarity).</text>
</comment>
<comment type="subcellular location">
    <subcellularLocation>
        <location evidence="1">Secreted</location>
    </subcellularLocation>
</comment>
<comment type="tissue specificity">
    <text>Expressed by the venom gland.</text>
</comment>
<comment type="domain">
    <text evidence="3">Has the structural arrangement of an alpha-helix connected to antiparallel beta-sheets by disulfide bonds (CS-alpha/beta).</text>
</comment>
<comment type="similarity">
    <text evidence="3">Belongs to the long (4 C-C) scorpion toxin superfamily. Sodium channel inhibitor family. Beta subfamily.</text>
</comment>
<sequence length="85" mass="9214">MKLFLLLLISASMLIDGLVNADGYIRGSNGCKVSCLWGNEGCNKECGAYGASYGYCWTWGLACWCEGLPDDKTWKSESNTCGGKK</sequence>
<feature type="signal peptide" evidence="1">
    <location>
        <begin position="1"/>
        <end position="21"/>
    </location>
</feature>
<feature type="chain" id="PRO_0000035209" description="Depressant insect toxin BmK ITa1">
    <location>
        <begin position="22"/>
        <end position="82"/>
    </location>
</feature>
<feature type="domain" description="LCN-type CS-alpha/beta" evidence="2">
    <location>
        <begin position="22"/>
        <end position="82"/>
    </location>
</feature>
<feature type="modified residue" description="Glycine amide" evidence="1">
    <location>
        <position position="82"/>
    </location>
</feature>
<feature type="disulfide bond" evidence="2">
    <location>
        <begin position="31"/>
        <end position="81"/>
    </location>
</feature>
<feature type="disulfide bond" evidence="2">
    <location>
        <begin position="35"/>
        <end position="56"/>
    </location>
</feature>
<feature type="disulfide bond" evidence="2">
    <location>
        <begin position="42"/>
        <end position="63"/>
    </location>
</feature>
<feature type="disulfide bond" evidence="2">
    <location>
        <begin position="46"/>
        <end position="65"/>
    </location>
</feature>
<dbReference type="EMBL" id="AY090782">
    <property type="protein sequence ID" value="AAM09097.1"/>
    <property type="molecule type" value="mRNA"/>
</dbReference>
<dbReference type="EMBL" id="AF132977">
    <property type="protein sequence ID" value="AAF03211.1"/>
    <property type="molecule type" value="mRNA"/>
</dbReference>
<dbReference type="SMR" id="Q8T3T0"/>
<dbReference type="GO" id="GO:0005576">
    <property type="term" value="C:extracellular region"/>
    <property type="evidence" value="ECO:0007669"/>
    <property type="project" value="UniProtKB-SubCell"/>
</dbReference>
<dbReference type="GO" id="GO:0019871">
    <property type="term" value="F:sodium channel inhibitor activity"/>
    <property type="evidence" value="ECO:0007669"/>
    <property type="project" value="InterPro"/>
</dbReference>
<dbReference type="GO" id="GO:0090729">
    <property type="term" value="F:toxin activity"/>
    <property type="evidence" value="ECO:0007669"/>
    <property type="project" value="UniProtKB-KW"/>
</dbReference>
<dbReference type="GO" id="GO:0006952">
    <property type="term" value="P:defense response"/>
    <property type="evidence" value="ECO:0007669"/>
    <property type="project" value="InterPro"/>
</dbReference>
<dbReference type="CDD" id="cd23106">
    <property type="entry name" value="neurotoxins_LC_scorpion"/>
    <property type="match status" value="1"/>
</dbReference>
<dbReference type="FunFam" id="3.30.30.10:FF:000002">
    <property type="entry name" value="Alpha-like toxin BmK-M1"/>
    <property type="match status" value="1"/>
</dbReference>
<dbReference type="Gene3D" id="3.30.30.10">
    <property type="entry name" value="Knottin, scorpion toxin-like"/>
    <property type="match status" value="1"/>
</dbReference>
<dbReference type="InterPro" id="IPR044062">
    <property type="entry name" value="LCN-type_CS_alpha_beta_dom"/>
</dbReference>
<dbReference type="InterPro" id="IPR003614">
    <property type="entry name" value="Scorpion_toxin-like"/>
</dbReference>
<dbReference type="InterPro" id="IPR036574">
    <property type="entry name" value="Scorpion_toxin-like_sf"/>
</dbReference>
<dbReference type="InterPro" id="IPR018218">
    <property type="entry name" value="Scorpion_toxinL"/>
</dbReference>
<dbReference type="InterPro" id="IPR002061">
    <property type="entry name" value="Scorpion_toxinL/defensin"/>
</dbReference>
<dbReference type="Pfam" id="PF00537">
    <property type="entry name" value="Toxin_3"/>
    <property type="match status" value="1"/>
</dbReference>
<dbReference type="PRINTS" id="PR00285">
    <property type="entry name" value="SCORPNTOXIN"/>
</dbReference>
<dbReference type="SMART" id="SM00505">
    <property type="entry name" value="Knot1"/>
    <property type="match status" value="1"/>
</dbReference>
<dbReference type="SUPFAM" id="SSF57095">
    <property type="entry name" value="Scorpion toxin-like"/>
    <property type="match status" value="1"/>
</dbReference>
<dbReference type="PROSITE" id="PS51863">
    <property type="entry name" value="LCN_CSAB"/>
    <property type="match status" value="1"/>
</dbReference>
<organism>
    <name type="scientific">Olivierus martensii</name>
    <name type="common">Manchurian scorpion</name>
    <name type="synonym">Mesobuthus martensii</name>
    <dbReference type="NCBI Taxonomy" id="34649"/>
    <lineage>
        <taxon>Eukaryota</taxon>
        <taxon>Metazoa</taxon>
        <taxon>Ecdysozoa</taxon>
        <taxon>Arthropoda</taxon>
        <taxon>Chelicerata</taxon>
        <taxon>Arachnida</taxon>
        <taxon>Scorpiones</taxon>
        <taxon>Buthida</taxon>
        <taxon>Buthoidea</taxon>
        <taxon>Buthidae</taxon>
        <taxon>Olivierus</taxon>
    </lineage>
</organism>
<name>SIXA1_OLIMR</name>